<gene>
    <name evidence="2" type="primary">rpsL</name>
    <name type="ordered locus">RHECIAT_CH0001744</name>
</gene>
<protein>
    <recommendedName>
        <fullName evidence="2">Small ribosomal subunit protein uS12</fullName>
    </recommendedName>
    <alternativeName>
        <fullName evidence="3">30S ribosomal protein S12</fullName>
    </alternativeName>
</protein>
<accession>B3PW62</accession>
<comment type="function">
    <text evidence="2">With S4 and S5 plays an important role in translational accuracy.</text>
</comment>
<comment type="function">
    <text evidence="2">Interacts with and stabilizes bases of the 16S rRNA that are involved in tRNA selection in the A site and with the mRNA backbone. Located at the interface of the 30S and 50S subunits, it traverses the body of the 30S subunit contacting proteins on the other side and probably holding the rRNA structure together. The combined cluster of proteins S8, S12 and S17 appears to hold together the shoulder and platform of the 30S subunit.</text>
</comment>
<comment type="subunit">
    <text evidence="2">Part of the 30S ribosomal subunit. Contacts proteins S8 and S17. May interact with IF1 in the 30S initiation complex.</text>
</comment>
<comment type="similarity">
    <text evidence="2">Belongs to the universal ribosomal protein uS12 family.</text>
</comment>
<proteinExistence type="inferred from homology"/>
<evidence type="ECO:0000250" key="1"/>
<evidence type="ECO:0000255" key="2">
    <source>
        <dbReference type="HAMAP-Rule" id="MF_00403"/>
    </source>
</evidence>
<evidence type="ECO:0000305" key="3"/>
<dbReference type="EMBL" id="CP001074">
    <property type="protein sequence ID" value="ACE90714.1"/>
    <property type="molecule type" value="Genomic_DNA"/>
</dbReference>
<dbReference type="SMR" id="B3PW62"/>
<dbReference type="KEGG" id="rec:RHECIAT_CH0001744"/>
<dbReference type="eggNOG" id="COG0048">
    <property type="taxonomic scope" value="Bacteria"/>
</dbReference>
<dbReference type="HOGENOM" id="CLU_104295_1_2_5"/>
<dbReference type="Proteomes" id="UP000008817">
    <property type="component" value="Chromosome"/>
</dbReference>
<dbReference type="GO" id="GO:0015935">
    <property type="term" value="C:small ribosomal subunit"/>
    <property type="evidence" value="ECO:0007669"/>
    <property type="project" value="InterPro"/>
</dbReference>
<dbReference type="GO" id="GO:0019843">
    <property type="term" value="F:rRNA binding"/>
    <property type="evidence" value="ECO:0007669"/>
    <property type="project" value="UniProtKB-UniRule"/>
</dbReference>
<dbReference type="GO" id="GO:0003735">
    <property type="term" value="F:structural constituent of ribosome"/>
    <property type="evidence" value="ECO:0007669"/>
    <property type="project" value="InterPro"/>
</dbReference>
<dbReference type="GO" id="GO:0000049">
    <property type="term" value="F:tRNA binding"/>
    <property type="evidence" value="ECO:0007669"/>
    <property type="project" value="UniProtKB-UniRule"/>
</dbReference>
<dbReference type="GO" id="GO:0006412">
    <property type="term" value="P:translation"/>
    <property type="evidence" value="ECO:0007669"/>
    <property type="project" value="UniProtKB-UniRule"/>
</dbReference>
<dbReference type="CDD" id="cd03368">
    <property type="entry name" value="Ribosomal_S12"/>
    <property type="match status" value="1"/>
</dbReference>
<dbReference type="FunFam" id="2.40.50.140:FF:000001">
    <property type="entry name" value="30S ribosomal protein S12"/>
    <property type="match status" value="1"/>
</dbReference>
<dbReference type="Gene3D" id="2.40.50.140">
    <property type="entry name" value="Nucleic acid-binding proteins"/>
    <property type="match status" value="1"/>
</dbReference>
<dbReference type="HAMAP" id="MF_00403_B">
    <property type="entry name" value="Ribosomal_uS12_B"/>
    <property type="match status" value="1"/>
</dbReference>
<dbReference type="InterPro" id="IPR012340">
    <property type="entry name" value="NA-bd_OB-fold"/>
</dbReference>
<dbReference type="InterPro" id="IPR006032">
    <property type="entry name" value="Ribosomal_uS12"/>
</dbReference>
<dbReference type="InterPro" id="IPR005679">
    <property type="entry name" value="Ribosomal_uS12_bac"/>
</dbReference>
<dbReference type="NCBIfam" id="TIGR00981">
    <property type="entry name" value="rpsL_bact"/>
    <property type="match status" value="1"/>
</dbReference>
<dbReference type="PANTHER" id="PTHR11652">
    <property type="entry name" value="30S RIBOSOMAL PROTEIN S12 FAMILY MEMBER"/>
    <property type="match status" value="1"/>
</dbReference>
<dbReference type="Pfam" id="PF00164">
    <property type="entry name" value="Ribosom_S12_S23"/>
    <property type="match status" value="1"/>
</dbReference>
<dbReference type="PIRSF" id="PIRSF002133">
    <property type="entry name" value="Ribosomal_S12/S23"/>
    <property type="match status" value="1"/>
</dbReference>
<dbReference type="PRINTS" id="PR01034">
    <property type="entry name" value="RIBOSOMALS12"/>
</dbReference>
<dbReference type="SUPFAM" id="SSF50249">
    <property type="entry name" value="Nucleic acid-binding proteins"/>
    <property type="match status" value="1"/>
</dbReference>
<dbReference type="PROSITE" id="PS00055">
    <property type="entry name" value="RIBOSOMAL_S12"/>
    <property type="match status" value="1"/>
</dbReference>
<keyword id="KW-0488">Methylation</keyword>
<keyword id="KW-0687">Ribonucleoprotein</keyword>
<keyword id="KW-0689">Ribosomal protein</keyword>
<keyword id="KW-0694">RNA-binding</keyword>
<keyword id="KW-0699">rRNA-binding</keyword>
<keyword id="KW-0820">tRNA-binding</keyword>
<organism>
    <name type="scientific">Rhizobium etli (strain CIAT 652)</name>
    <dbReference type="NCBI Taxonomy" id="491916"/>
    <lineage>
        <taxon>Bacteria</taxon>
        <taxon>Pseudomonadati</taxon>
        <taxon>Pseudomonadota</taxon>
        <taxon>Alphaproteobacteria</taxon>
        <taxon>Hyphomicrobiales</taxon>
        <taxon>Rhizobiaceae</taxon>
        <taxon>Rhizobium/Agrobacterium group</taxon>
        <taxon>Rhizobium</taxon>
    </lineage>
</organism>
<name>RS12_RHIE6</name>
<reference key="1">
    <citation type="journal article" date="2010" name="Appl. Environ. Microbiol.">
        <title>Conserved symbiotic plasmid DNA sequences in the multireplicon pangenomic structure of Rhizobium etli.</title>
        <authorList>
            <person name="Gonzalez V."/>
            <person name="Acosta J.L."/>
            <person name="Santamaria R.I."/>
            <person name="Bustos P."/>
            <person name="Fernandez J.L."/>
            <person name="Hernandez Gonzalez I.L."/>
            <person name="Diaz R."/>
            <person name="Flores M."/>
            <person name="Palacios R."/>
            <person name="Mora J."/>
            <person name="Davila G."/>
        </authorList>
    </citation>
    <scope>NUCLEOTIDE SEQUENCE [LARGE SCALE GENOMIC DNA]</scope>
    <source>
        <strain>CIAT 652</strain>
    </source>
</reference>
<feature type="chain" id="PRO_1000194214" description="Small ribosomal subunit protein uS12">
    <location>
        <begin position="1"/>
        <end position="123"/>
    </location>
</feature>
<feature type="modified residue" description="3-methylthioaspartic acid" evidence="1">
    <location>
        <position position="89"/>
    </location>
</feature>
<sequence length="123" mass="13987">MPTVNQLIRKPRQANVKRNKVPALQENPQKRGVCTRVYTTTPKKPNSALRKVAKIRLTNGFEVIGYIPGEGHNLQEHSVVMIRGGRVKDLPGVRYHIIRGVLDTQGVKNRKQRRSKYGAKRPK</sequence>